<reference key="1">
    <citation type="submission" date="2007-05" db="EMBL/GenBank/DDBJ databases">
        <title>Complete sequence of chromosome of Staphylococcus aureus subsp. aureus JH9.</title>
        <authorList>
            <consortium name="US DOE Joint Genome Institute"/>
            <person name="Copeland A."/>
            <person name="Lucas S."/>
            <person name="Lapidus A."/>
            <person name="Barry K."/>
            <person name="Detter J.C."/>
            <person name="Glavina del Rio T."/>
            <person name="Hammon N."/>
            <person name="Israni S."/>
            <person name="Pitluck S."/>
            <person name="Chain P."/>
            <person name="Malfatti S."/>
            <person name="Shin M."/>
            <person name="Vergez L."/>
            <person name="Schmutz J."/>
            <person name="Larimer F."/>
            <person name="Land M."/>
            <person name="Hauser L."/>
            <person name="Kyrpides N."/>
            <person name="Kim E."/>
            <person name="Tomasz A."/>
            <person name="Richardson P."/>
        </authorList>
    </citation>
    <scope>NUCLEOTIDE SEQUENCE [LARGE SCALE GENOMIC DNA]</scope>
    <source>
        <strain>JH9</strain>
    </source>
</reference>
<comment type="function">
    <text evidence="1">Catalyzes the ATP-dependent phosphorylation of N-acetyl-L-glutamate.</text>
</comment>
<comment type="catalytic activity">
    <reaction evidence="1">
        <text>N-acetyl-L-glutamate + ATP = N-acetyl-L-glutamyl 5-phosphate + ADP</text>
        <dbReference type="Rhea" id="RHEA:14629"/>
        <dbReference type="ChEBI" id="CHEBI:30616"/>
        <dbReference type="ChEBI" id="CHEBI:44337"/>
        <dbReference type="ChEBI" id="CHEBI:57936"/>
        <dbReference type="ChEBI" id="CHEBI:456216"/>
        <dbReference type="EC" id="2.7.2.8"/>
    </reaction>
</comment>
<comment type="pathway">
    <text evidence="1">Amino-acid biosynthesis; L-arginine biosynthesis; N(2)-acetyl-L-ornithine from L-glutamate: step 2/4.</text>
</comment>
<comment type="subcellular location">
    <subcellularLocation>
        <location evidence="1">Cytoplasm</location>
    </subcellularLocation>
</comment>
<comment type="similarity">
    <text evidence="1">Belongs to the acetylglutamate kinase family. ArgB subfamily.</text>
</comment>
<protein>
    <recommendedName>
        <fullName evidence="1">Acetylglutamate kinase</fullName>
        <ecNumber evidence="1">2.7.2.8</ecNumber>
    </recommendedName>
    <alternativeName>
        <fullName evidence="1">N-acetyl-L-glutamate 5-phosphotransferase</fullName>
    </alternativeName>
    <alternativeName>
        <fullName evidence="1">NAG kinase</fullName>
        <shortName evidence="1">NAGK</shortName>
    </alternativeName>
</protein>
<accession>A5IP51</accession>
<feature type="chain" id="PRO_1000075322" description="Acetylglutamate kinase">
    <location>
        <begin position="1"/>
        <end position="254"/>
    </location>
</feature>
<feature type="binding site" evidence="1">
    <location>
        <begin position="40"/>
        <end position="41"/>
    </location>
    <ligand>
        <name>substrate</name>
    </ligand>
</feature>
<feature type="binding site" evidence="1">
    <location>
        <position position="62"/>
    </location>
    <ligand>
        <name>substrate</name>
    </ligand>
</feature>
<feature type="binding site" evidence="1">
    <location>
        <position position="154"/>
    </location>
    <ligand>
        <name>substrate</name>
    </ligand>
</feature>
<feature type="site" description="Transition state stabilizer" evidence="1">
    <location>
        <position position="7"/>
    </location>
</feature>
<feature type="site" description="Transition state stabilizer" evidence="1">
    <location>
        <position position="212"/>
    </location>
</feature>
<sequence length="254" mass="27739">MKFIVIKIGGSTLSDMHPSIINNIKHLRSNNIYPIIVHGGGPFINEALSNQQIEPHFVNGLRVTDKATMTITKHTLIADVNTALVAQFNQHQCSAIGLCGLDAQLFEITSFDQQYGYVGVPTALNKDALQYLCTKFVPIINSIGFNNHDGEFYNINADTLAYFIASSLKAPIYVLSNIAGVLINDVVIPQLPLVDIHQYIEHGDIYGGMIPKVLDAKNAIENGCPKVIIASGNKPNIIESIYNNDFVGTTILNS</sequence>
<dbReference type="EC" id="2.7.2.8" evidence="1"/>
<dbReference type="EMBL" id="CP000703">
    <property type="protein sequence ID" value="ABQ47974.1"/>
    <property type="molecule type" value="Genomic_DNA"/>
</dbReference>
<dbReference type="RefSeq" id="WP_000668894.1">
    <property type="nucleotide sequence ID" value="NC_009487.1"/>
</dbReference>
<dbReference type="SMR" id="A5IP51"/>
<dbReference type="KEGG" id="saj:SaurJH9_0167"/>
<dbReference type="HOGENOM" id="CLU_053680_1_0_9"/>
<dbReference type="UniPathway" id="UPA00068">
    <property type="reaction ID" value="UER00107"/>
</dbReference>
<dbReference type="GO" id="GO:0005737">
    <property type="term" value="C:cytoplasm"/>
    <property type="evidence" value="ECO:0007669"/>
    <property type="project" value="UniProtKB-SubCell"/>
</dbReference>
<dbReference type="GO" id="GO:0003991">
    <property type="term" value="F:acetylglutamate kinase activity"/>
    <property type="evidence" value="ECO:0007669"/>
    <property type="project" value="UniProtKB-UniRule"/>
</dbReference>
<dbReference type="GO" id="GO:0005524">
    <property type="term" value="F:ATP binding"/>
    <property type="evidence" value="ECO:0007669"/>
    <property type="project" value="UniProtKB-UniRule"/>
</dbReference>
<dbReference type="GO" id="GO:0042450">
    <property type="term" value="P:arginine biosynthetic process via ornithine"/>
    <property type="evidence" value="ECO:0007669"/>
    <property type="project" value="UniProtKB-UniRule"/>
</dbReference>
<dbReference type="GO" id="GO:0006526">
    <property type="term" value="P:L-arginine biosynthetic process"/>
    <property type="evidence" value="ECO:0007669"/>
    <property type="project" value="UniProtKB-UniPathway"/>
</dbReference>
<dbReference type="CDD" id="cd04238">
    <property type="entry name" value="AAK_NAGK-like"/>
    <property type="match status" value="1"/>
</dbReference>
<dbReference type="FunFam" id="3.40.1160.10:FF:000037">
    <property type="entry name" value="Acetylglutamate kinase"/>
    <property type="match status" value="1"/>
</dbReference>
<dbReference type="Gene3D" id="3.40.1160.10">
    <property type="entry name" value="Acetylglutamate kinase-like"/>
    <property type="match status" value="1"/>
</dbReference>
<dbReference type="HAMAP" id="MF_00082">
    <property type="entry name" value="ArgB"/>
    <property type="match status" value="1"/>
</dbReference>
<dbReference type="InterPro" id="IPR036393">
    <property type="entry name" value="AceGlu_kinase-like_sf"/>
</dbReference>
<dbReference type="InterPro" id="IPR004662">
    <property type="entry name" value="AcgluKinase_fam"/>
</dbReference>
<dbReference type="InterPro" id="IPR037528">
    <property type="entry name" value="ArgB"/>
</dbReference>
<dbReference type="InterPro" id="IPR001048">
    <property type="entry name" value="Asp/Glu/Uridylate_kinase"/>
</dbReference>
<dbReference type="NCBIfam" id="TIGR00761">
    <property type="entry name" value="argB"/>
    <property type="match status" value="1"/>
</dbReference>
<dbReference type="PANTHER" id="PTHR23342">
    <property type="entry name" value="N-ACETYLGLUTAMATE SYNTHASE"/>
    <property type="match status" value="1"/>
</dbReference>
<dbReference type="PANTHER" id="PTHR23342:SF0">
    <property type="entry name" value="N-ACETYLGLUTAMATE SYNTHASE, MITOCHONDRIAL"/>
    <property type="match status" value="1"/>
</dbReference>
<dbReference type="Pfam" id="PF00696">
    <property type="entry name" value="AA_kinase"/>
    <property type="match status" value="1"/>
</dbReference>
<dbReference type="PIRSF" id="PIRSF000728">
    <property type="entry name" value="NAGK"/>
    <property type="match status" value="1"/>
</dbReference>
<dbReference type="SUPFAM" id="SSF53633">
    <property type="entry name" value="Carbamate kinase-like"/>
    <property type="match status" value="1"/>
</dbReference>
<evidence type="ECO:0000255" key="1">
    <source>
        <dbReference type="HAMAP-Rule" id="MF_00082"/>
    </source>
</evidence>
<organism>
    <name type="scientific">Staphylococcus aureus (strain JH9)</name>
    <dbReference type="NCBI Taxonomy" id="359786"/>
    <lineage>
        <taxon>Bacteria</taxon>
        <taxon>Bacillati</taxon>
        <taxon>Bacillota</taxon>
        <taxon>Bacilli</taxon>
        <taxon>Bacillales</taxon>
        <taxon>Staphylococcaceae</taxon>
        <taxon>Staphylococcus</taxon>
    </lineage>
</organism>
<gene>
    <name evidence="1" type="primary">argB</name>
    <name type="ordered locus">SaurJH9_0167</name>
</gene>
<proteinExistence type="inferred from homology"/>
<keyword id="KW-0028">Amino-acid biosynthesis</keyword>
<keyword id="KW-0055">Arginine biosynthesis</keyword>
<keyword id="KW-0067">ATP-binding</keyword>
<keyword id="KW-0963">Cytoplasm</keyword>
<keyword id="KW-0418">Kinase</keyword>
<keyword id="KW-0547">Nucleotide-binding</keyword>
<keyword id="KW-0808">Transferase</keyword>
<name>ARGB_STAA9</name>